<proteinExistence type="inferred from homology"/>
<accession>Q72TM5</accession>
<dbReference type="EMBL" id="AE016823">
    <property type="protein sequence ID" value="AAS69603.1"/>
    <property type="molecule type" value="Genomic_DNA"/>
</dbReference>
<dbReference type="RefSeq" id="WP_000576697.1">
    <property type="nucleotide sequence ID" value="NC_005823.1"/>
</dbReference>
<dbReference type="SMR" id="Q72TM5"/>
<dbReference type="GeneID" id="61144317"/>
<dbReference type="KEGG" id="lic:LIC_10992"/>
<dbReference type="HOGENOM" id="CLU_077094_2_0_12"/>
<dbReference type="Proteomes" id="UP000007037">
    <property type="component" value="Chromosome I"/>
</dbReference>
<dbReference type="GO" id="GO:0005886">
    <property type="term" value="C:plasma membrane"/>
    <property type="evidence" value="ECO:0007669"/>
    <property type="project" value="UniProtKB-SubCell"/>
</dbReference>
<dbReference type="GO" id="GO:0005524">
    <property type="term" value="F:ATP binding"/>
    <property type="evidence" value="ECO:0007669"/>
    <property type="project" value="UniProtKB-UniRule"/>
</dbReference>
<dbReference type="GO" id="GO:0008556">
    <property type="term" value="F:P-type potassium transmembrane transporter activity"/>
    <property type="evidence" value="ECO:0007669"/>
    <property type="project" value="InterPro"/>
</dbReference>
<dbReference type="HAMAP" id="MF_00276">
    <property type="entry name" value="KdpC"/>
    <property type="match status" value="1"/>
</dbReference>
<dbReference type="InterPro" id="IPR003820">
    <property type="entry name" value="KdpC"/>
</dbReference>
<dbReference type="NCBIfam" id="TIGR00681">
    <property type="entry name" value="kdpC"/>
    <property type="match status" value="1"/>
</dbReference>
<dbReference type="NCBIfam" id="NF001454">
    <property type="entry name" value="PRK00315.1"/>
    <property type="match status" value="1"/>
</dbReference>
<dbReference type="PANTHER" id="PTHR30042">
    <property type="entry name" value="POTASSIUM-TRANSPORTING ATPASE C CHAIN"/>
    <property type="match status" value="1"/>
</dbReference>
<dbReference type="PANTHER" id="PTHR30042:SF2">
    <property type="entry name" value="POTASSIUM-TRANSPORTING ATPASE KDPC SUBUNIT"/>
    <property type="match status" value="1"/>
</dbReference>
<dbReference type="Pfam" id="PF02669">
    <property type="entry name" value="KdpC"/>
    <property type="match status" value="1"/>
</dbReference>
<dbReference type="PIRSF" id="PIRSF001296">
    <property type="entry name" value="K_ATPase_KdpC"/>
    <property type="match status" value="1"/>
</dbReference>
<sequence>MIFLNIISISIRLLLILTLITGILYPIVTTGFAERFFPFRSSGSRVVIQGKIVGSELIAQKFIKDEYFWPRPSAMDYAAGASNASVTNVFLKAKVEERKKFLLEKHSEQTQVPPDLLFASGSGLDPHISPDSALFQINRVAKSRKLTEGQILRLKNIVEESVEKGYIGENRINVLLLNLKLDSEFGIILK</sequence>
<comment type="function">
    <text evidence="1">Part of the high-affinity ATP-driven potassium transport (or Kdp) system, which catalyzes the hydrolysis of ATP coupled with the electrogenic transport of potassium into the cytoplasm. This subunit acts as a catalytic chaperone that increases the ATP-binding affinity of the ATP-hydrolyzing subunit KdpB by the formation of a transient KdpB/KdpC/ATP ternary complex.</text>
</comment>
<comment type="subunit">
    <text evidence="1">The system is composed of three essential subunits: KdpA, KdpB and KdpC.</text>
</comment>
<comment type="subcellular location">
    <subcellularLocation>
        <location evidence="1">Cell inner membrane</location>
        <topology evidence="1">Single-pass membrane protein</topology>
    </subcellularLocation>
</comment>
<comment type="similarity">
    <text evidence="1">Belongs to the KdpC family.</text>
</comment>
<feature type="chain" id="PRO_0000196994" description="Potassium-transporting ATPase KdpC subunit">
    <location>
        <begin position="1"/>
        <end position="190"/>
    </location>
</feature>
<feature type="transmembrane region" description="Helical" evidence="1">
    <location>
        <begin position="13"/>
        <end position="33"/>
    </location>
</feature>
<gene>
    <name evidence="1" type="primary">kdpC</name>
    <name type="ordered locus">LIC_10992</name>
</gene>
<protein>
    <recommendedName>
        <fullName evidence="1">Potassium-transporting ATPase KdpC subunit</fullName>
    </recommendedName>
    <alternativeName>
        <fullName evidence="1">ATP phosphohydrolase [potassium-transporting] C chain</fullName>
    </alternativeName>
    <alternativeName>
        <fullName evidence="1">Potassium-binding and translocating subunit C</fullName>
    </alternativeName>
    <alternativeName>
        <fullName evidence="1">Potassium-translocating ATPase C chain</fullName>
    </alternativeName>
</protein>
<organism>
    <name type="scientific">Leptospira interrogans serogroup Icterohaemorrhagiae serovar copenhageni (strain Fiocruz L1-130)</name>
    <dbReference type="NCBI Taxonomy" id="267671"/>
    <lineage>
        <taxon>Bacteria</taxon>
        <taxon>Pseudomonadati</taxon>
        <taxon>Spirochaetota</taxon>
        <taxon>Spirochaetia</taxon>
        <taxon>Leptospirales</taxon>
        <taxon>Leptospiraceae</taxon>
        <taxon>Leptospira</taxon>
    </lineage>
</organism>
<keyword id="KW-0067">ATP-binding</keyword>
<keyword id="KW-0997">Cell inner membrane</keyword>
<keyword id="KW-1003">Cell membrane</keyword>
<keyword id="KW-0406">Ion transport</keyword>
<keyword id="KW-0472">Membrane</keyword>
<keyword id="KW-0547">Nucleotide-binding</keyword>
<keyword id="KW-0630">Potassium</keyword>
<keyword id="KW-0633">Potassium transport</keyword>
<keyword id="KW-0812">Transmembrane</keyword>
<keyword id="KW-1133">Transmembrane helix</keyword>
<keyword id="KW-0813">Transport</keyword>
<reference key="1">
    <citation type="journal article" date="2004" name="J. Bacteriol.">
        <title>Comparative genomics of two Leptospira interrogans serovars reveals novel insights into physiology and pathogenesis.</title>
        <authorList>
            <person name="Nascimento A.L.T.O."/>
            <person name="Ko A.I."/>
            <person name="Martins E.A.L."/>
            <person name="Monteiro-Vitorello C.B."/>
            <person name="Ho P.L."/>
            <person name="Haake D.A."/>
            <person name="Verjovski-Almeida S."/>
            <person name="Hartskeerl R.A."/>
            <person name="Marques M.V."/>
            <person name="Oliveira M.C."/>
            <person name="Menck C.F.M."/>
            <person name="Leite L.C.C."/>
            <person name="Carrer H."/>
            <person name="Coutinho L.L."/>
            <person name="Degrave W.M."/>
            <person name="Dellagostin O.A."/>
            <person name="El-Dorry H."/>
            <person name="Ferro E.S."/>
            <person name="Ferro M.I.T."/>
            <person name="Furlan L.R."/>
            <person name="Gamberini M."/>
            <person name="Giglioti E.A."/>
            <person name="Goes-Neto A."/>
            <person name="Goldman G.H."/>
            <person name="Goldman M.H.S."/>
            <person name="Harakava R."/>
            <person name="Jeronimo S.M.B."/>
            <person name="Junqueira-de-Azevedo I.L.M."/>
            <person name="Kimura E.T."/>
            <person name="Kuramae E.E."/>
            <person name="Lemos E.G.M."/>
            <person name="Lemos M.V.F."/>
            <person name="Marino C.L."/>
            <person name="Nunes L.R."/>
            <person name="de Oliveira R.C."/>
            <person name="Pereira G.G."/>
            <person name="Reis M.S."/>
            <person name="Schriefer A."/>
            <person name="Siqueira W.J."/>
            <person name="Sommer P."/>
            <person name="Tsai S.M."/>
            <person name="Simpson A.J.G."/>
            <person name="Ferro J.A."/>
            <person name="Camargo L.E.A."/>
            <person name="Kitajima J.P."/>
            <person name="Setubal J.C."/>
            <person name="Van Sluys M.A."/>
        </authorList>
    </citation>
    <scope>NUCLEOTIDE SEQUENCE [LARGE SCALE GENOMIC DNA]</scope>
    <source>
        <strain>Fiocruz L1-130</strain>
    </source>
</reference>
<name>KDPC_LEPIC</name>
<evidence type="ECO:0000255" key="1">
    <source>
        <dbReference type="HAMAP-Rule" id="MF_00276"/>
    </source>
</evidence>